<feature type="chain" id="PRO_0000356364" description="Large ribosomal subunit protein bL33">
    <location>
        <begin position="1"/>
        <end position="51"/>
    </location>
</feature>
<protein>
    <recommendedName>
        <fullName evidence="1">Large ribosomal subunit protein bL33</fullName>
    </recommendedName>
    <alternativeName>
        <fullName evidence="2">50S ribosomal protein L33</fullName>
    </alternativeName>
</protein>
<keyword id="KW-0687">Ribonucleoprotein</keyword>
<keyword id="KW-0689">Ribosomal protein</keyword>
<name>RL33_ACIBS</name>
<gene>
    <name evidence="1" type="primary">rpmG</name>
    <name type="ordered locus">ABSDF3064</name>
</gene>
<organism>
    <name type="scientific">Acinetobacter baumannii (strain SDF)</name>
    <dbReference type="NCBI Taxonomy" id="509170"/>
    <lineage>
        <taxon>Bacteria</taxon>
        <taxon>Pseudomonadati</taxon>
        <taxon>Pseudomonadota</taxon>
        <taxon>Gammaproteobacteria</taxon>
        <taxon>Moraxellales</taxon>
        <taxon>Moraxellaceae</taxon>
        <taxon>Acinetobacter</taxon>
        <taxon>Acinetobacter calcoaceticus/baumannii complex</taxon>
    </lineage>
</organism>
<accession>B0VL80</accession>
<proteinExistence type="inferred from homology"/>
<comment type="similarity">
    <text evidence="1">Belongs to the bacterial ribosomal protein bL33 family.</text>
</comment>
<dbReference type="EMBL" id="CU468230">
    <property type="protein sequence ID" value="CAP02348.1"/>
    <property type="molecule type" value="Genomic_DNA"/>
</dbReference>
<dbReference type="SMR" id="B0VL80"/>
<dbReference type="KEGG" id="abm:ABSDF3064"/>
<dbReference type="HOGENOM" id="CLU_190949_1_1_6"/>
<dbReference type="Proteomes" id="UP000001741">
    <property type="component" value="Chromosome"/>
</dbReference>
<dbReference type="GO" id="GO:0022625">
    <property type="term" value="C:cytosolic large ribosomal subunit"/>
    <property type="evidence" value="ECO:0007669"/>
    <property type="project" value="TreeGrafter"/>
</dbReference>
<dbReference type="GO" id="GO:0003735">
    <property type="term" value="F:structural constituent of ribosome"/>
    <property type="evidence" value="ECO:0007669"/>
    <property type="project" value="InterPro"/>
</dbReference>
<dbReference type="GO" id="GO:0006412">
    <property type="term" value="P:translation"/>
    <property type="evidence" value="ECO:0007669"/>
    <property type="project" value="UniProtKB-UniRule"/>
</dbReference>
<dbReference type="FunFam" id="2.20.28.120:FF:000001">
    <property type="entry name" value="50S ribosomal protein L33"/>
    <property type="match status" value="1"/>
</dbReference>
<dbReference type="Gene3D" id="2.20.28.120">
    <property type="entry name" value="Ribosomal protein L33"/>
    <property type="match status" value="1"/>
</dbReference>
<dbReference type="HAMAP" id="MF_00294">
    <property type="entry name" value="Ribosomal_bL33"/>
    <property type="match status" value="1"/>
</dbReference>
<dbReference type="InterPro" id="IPR001705">
    <property type="entry name" value="Ribosomal_bL33"/>
</dbReference>
<dbReference type="InterPro" id="IPR018264">
    <property type="entry name" value="Ribosomal_bL33_CS"/>
</dbReference>
<dbReference type="InterPro" id="IPR038584">
    <property type="entry name" value="Ribosomal_bL33_sf"/>
</dbReference>
<dbReference type="InterPro" id="IPR011332">
    <property type="entry name" value="Ribosomal_zn-bd"/>
</dbReference>
<dbReference type="NCBIfam" id="NF001860">
    <property type="entry name" value="PRK00595.1"/>
    <property type="match status" value="1"/>
</dbReference>
<dbReference type="NCBIfam" id="TIGR01023">
    <property type="entry name" value="rpmG_bact"/>
    <property type="match status" value="1"/>
</dbReference>
<dbReference type="PANTHER" id="PTHR15238">
    <property type="entry name" value="54S RIBOSOMAL PROTEIN L39, MITOCHONDRIAL"/>
    <property type="match status" value="1"/>
</dbReference>
<dbReference type="PANTHER" id="PTHR15238:SF1">
    <property type="entry name" value="LARGE RIBOSOMAL SUBUNIT PROTEIN BL33M"/>
    <property type="match status" value="1"/>
</dbReference>
<dbReference type="Pfam" id="PF00471">
    <property type="entry name" value="Ribosomal_L33"/>
    <property type="match status" value="1"/>
</dbReference>
<dbReference type="SUPFAM" id="SSF57829">
    <property type="entry name" value="Zn-binding ribosomal proteins"/>
    <property type="match status" value="1"/>
</dbReference>
<dbReference type="PROSITE" id="PS00582">
    <property type="entry name" value="RIBOSOMAL_L33"/>
    <property type="match status" value="1"/>
</dbReference>
<sequence>MRDKIRLVSSAGTGYFYTTTKNKRTMPEKMEIKKFDPKIRQHVIFKEAKIK</sequence>
<evidence type="ECO:0000255" key="1">
    <source>
        <dbReference type="HAMAP-Rule" id="MF_00294"/>
    </source>
</evidence>
<evidence type="ECO:0000305" key="2"/>
<reference key="1">
    <citation type="journal article" date="2008" name="PLoS ONE">
        <title>Comparative analysis of Acinetobacters: three genomes for three lifestyles.</title>
        <authorList>
            <person name="Vallenet D."/>
            <person name="Nordmann P."/>
            <person name="Barbe V."/>
            <person name="Poirel L."/>
            <person name="Mangenot S."/>
            <person name="Bataille E."/>
            <person name="Dossat C."/>
            <person name="Gas S."/>
            <person name="Kreimeyer A."/>
            <person name="Lenoble P."/>
            <person name="Oztas S."/>
            <person name="Poulain J."/>
            <person name="Segurens B."/>
            <person name="Robert C."/>
            <person name="Abergel C."/>
            <person name="Claverie J.-M."/>
            <person name="Raoult D."/>
            <person name="Medigue C."/>
            <person name="Weissenbach J."/>
            <person name="Cruveiller S."/>
        </authorList>
    </citation>
    <scope>NUCLEOTIDE SEQUENCE [LARGE SCALE GENOMIC DNA]</scope>
    <source>
        <strain>SDF</strain>
    </source>
</reference>